<name>GPDA_PSET1</name>
<gene>
    <name evidence="1" type="primary">gpsA</name>
    <name type="ordered locus">PSHAa0370</name>
</gene>
<organism>
    <name type="scientific">Pseudoalteromonas translucida (strain TAC 125)</name>
    <dbReference type="NCBI Taxonomy" id="326442"/>
    <lineage>
        <taxon>Bacteria</taxon>
        <taxon>Pseudomonadati</taxon>
        <taxon>Pseudomonadota</taxon>
        <taxon>Gammaproteobacteria</taxon>
        <taxon>Alteromonadales</taxon>
        <taxon>Pseudoalteromonadaceae</taxon>
        <taxon>Pseudoalteromonas</taxon>
    </lineage>
</organism>
<evidence type="ECO:0000255" key="1">
    <source>
        <dbReference type="HAMAP-Rule" id="MF_00394"/>
    </source>
</evidence>
<proteinExistence type="inferred from homology"/>
<dbReference type="EC" id="1.1.1.94" evidence="1"/>
<dbReference type="EMBL" id="CR954246">
    <property type="protein sequence ID" value="CAI85468.1"/>
    <property type="molecule type" value="Genomic_DNA"/>
</dbReference>
<dbReference type="SMR" id="Q3IIE0"/>
<dbReference type="STRING" id="326442.PSHAa0370"/>
<dbReference type="KEGG" id="pha:PSHAa0370"/>
<dbReference type="PATRIC" id="fig|326442.8.peg.354"/>
<dbReference type="eggNOG" id="COG0240">
    <property type="taxonomic scope" value="Bacteria"/>
</dbReference>
<dbReference type="HOGENOM" id="CLU_033449_0_2_6"/>
<dbReference type="BioCyc" id="PHAL326442:PSHA_RS01835-MONOMER"/>
<dbReference type="UniPathway" id="UPA00940"/>
<dbReference type="Proteomes" id="UP000006843">
    <property type="component" value="Chromosome I"/>
</dbReference>
<dbReference type="GO" id="GO:0005829">
    <property type="term" value="C:cytosol"/>
    <property type="evidence" value="ECO:0007669"/>
    <property type="project" value="TreeGrafter"/>
</dbReference>
<dbReference type="GO" id="GO:0047952">
    <property type="term" value="F:glycerol-3-phosphate dehydrogenase [NAD(P)+] activity"/>
    <property type="evidence" value="ECO:0007669"/>
    <property type="project" value="UniProtKB-UniRule"/>
</dbReference>
<dbReference type="GO" id="GO:0051287">
    <property type="term" value="F:NAD binding"/>
    <property type="evidence" value="ECO:0007669"/>
    <property type="project" value="InterPro"/>
</dbReference>
<dbReference type="GO" id="GO:0005975">
    <property type="term" value="P:carbohydrate metabolic process"/>
    <property type="evidence" value="ECO:0007669"/>
    <property type="project" value="InterPro"/>
</dbReference>
<dbReference type="GO" id="GO:0046167">
    <property type="term" value="P:glycerol-3-phosphate biosynthetic process"/>
    <property type="evidence" value="ECO:0007669"/>
    <property type="project" value="UniProtKB-UniRule"/>
</dbReference>
<dbReference type="GO" id="GO:0046168">
    <property type="term" value="P:glycerol-3-phosphate catabolic process"/>
    <property type="evidence" value="ECO:0007669"/>
    <property type="project" value="InterPro"/>
</dbReference>
<dbReference type="GO" id="GO:0046474">
    <property type="term" value="P:glycerophospholipid biosynthetic process"/>
    <property type="evidence" value="ECO:0007669"/>
    <property type="project" value="TreeGrafter"/>
</dbReference>
<dbReference type="FunFam" id="1.10.1040.10:FF:000001">
    <property type="entry name" value="Glycerol-3-phosphate dehydrogenase [NAD(P)+]"/>
    <property type="match status" value="1"/>
</dbReference>
<dbReference type="FunFam" id="3.40.50.720:FF:000019">
    <property type="entry name" value="Glycerol-3-phosphate dehydrogenase [NAD(P)+]"/>
    <property type="match status" value="1"/>
</dbReference>
<dbReference type="Gene3D" id="1.10.1040.10">
    <property type="entry name" value="N-(1-d-carboxylethyl)-l-norvaline Dehydrogenase, domain 2"/>
    <property type="match status" value="1"/>
</dbReference>
<dbReference type="Gene3D" id="3.40.50.720">
    <property type="entry name" value="NAD(P)-binding Rossmann-like Domain"/>
    <property type="match status" value="1"/>
</dbReference>
<dbReference type="HAMAP" id="MF_00394">
    <property type="entry name" value="NAD_Glyc3P_dehydrog"/>
    <property type="match status" value="1"/>
</dbReference>
<dbReference type="InterPro" id="IPR008927">
    <property type="entry name" value="6-PGluconate_DH-like_C_sf"/>
</dbReference>
<dbReference type="InterPro" id="IPR013328">
    <property type="entry name" value="6PGD_dom2"/>
</dbReference>
<dbReference type="InterPro" id="IPR006168">
    <property type="entry name" value="G3P_DH_NAD-dep"/>
</dbReference>
<dbReference type="InterPro" id="IPR006109">
    <property type="entry name" value="G3P_DH_NAD-dep_C"/>
</dbReference>
<dbReference type="InterPro" id="IPR011128">
    <property type="entry name" value="G3P_DH_NAD-dep_N"/>
</dbReference>
<dbReference type="InterPro" id="IPR036291">
    <property type="entry name" value="NAD(P)-bd_dom_sf"/>
</dbReference>
<dbReference type="NCBIfam" id="NF000939">
    <property type="entry name" value="PRK00094.1-1"/>
    <property type="match status" value="1"/>
</dbReference>
<dbReference type="NCBIfam" id="NF000940">
    <property type="entry name" value="PRK00094.1-2"/>
    <property type="match status" value="1"/>
</dbReference>
<dbReference type="NCBIfam" id="NF000942">
    <property type="entry name" value="PRK00094.1-4"/>
    <property type="match status" value="1"/>
</dbReference>
<dbReference type="PANTHER" id="PTHR11728">
    <property type="entry name" value="GLYCEROL-3-PHOSPHATE DEHYDROGENASE"/>
    <property type="match status" value="1"/>
</dbReference>
<dbReference type="PANTHER" id="PTHR11728:SF1">
    <property type="entry name" value="GLYCEROL-3-PHOSPHATE DEHYDROGENASE [NAD(+)] 2, CHLOROPLASTIC"/>
    <property type="match status" value="1"/>
</dbReference>
<dbReference type="Pfam" id="PF07479">
    <property type="entry name" value="NAD_Gly3P_dh_C"/>
    <property type="match status" value="1"/>
</dbReference>
<dbReference type="Pfam" id="PF01210">
    <property type="entry name" value="NAD_Gly3P_dh_N"/>
    <property type="match status" value="1"/>
</dbReference>
<dbReference type="PIRSF" id="PIRSF000114">
    <property type="entry name" value="Glycerol-3-P_dh"/>
    <property type="match status" value="1"/>
</dbReference>
<dbReference type="PRINTS" id="PR00077">
    <property type="entry name" value="GPDHDRGNASE"/>
</dbReference>
<dbReference type="SUPFAM" id="SSF48179">
    <property type="entry name" value="6-phosphogluconate dehydrogenase C-terminal domain-like"/>
    <property type="match status" value="1"/>
</dbReference>
<dbReference type="SUPFAM" id="SSF51735">
    <property type="entry name" value="NAD(P)-binding Rossmann-fold domains"/>
    <property type="match status" value="1"/>
</dbReference>
<dbReference type="PROSITE" id="PS00957">
    <property type="entry name" value="NAD_G3PDH"/>
    <property type="match status" value="1"/>
</dbReference>
<sequence>MSTATSAVTVLGAGSYGTALAICLARNGHQVTLWGRNSDDVATLAAERKNQRYLPDIPFPDTLTLEADLQRAAASNEIVLVVVPSHAFGDTLKQIKPALQQGAKVAWATKGLEPNTGRLLQEVAVQELGDAIPLAVLSGPTFAKEMAMGSPTAISVSSTSTEFAQQLADLLHCGRSFRVYNNDDFIGIQLGGAVKNVIAIGAGISDGVGFGANARTALITRGLAELTRLGCALGAKPETFMGMAGLGDLILTCTDNQSRNRRFGLALGKGESVEAAIESIGQVVEGFRNTKEVYLLAQRSGVEMPITEQIYKVLYENKDMKEAAMALLGREQRSE</sequence>
<accession>Q3IIE0</accession>
<protein>
    <recommendedName>
        <fullName evidence="1">Glycerol-3-phosphate dehydrogenase [NAD(P)+]</fullName>
        <ecNumber evidence="1">1.1.1.94</ecNumber>
    </recommendedName>
    <alternativeName>
        <fullName evidence="1">NAD(P)(+)-dependent glycerol-3-phosphate dehydrogenase</fullName>
    </alternativeName>
    <alternativeName>
        <fullName evidence="1">NAD(P)H-dependent dihydroxyacetone-phosphate reductase</fullName>
    </alternativeName>
</protein>
<comment type="function">
    <text evidence="1">Catalyzes the reduction of the glycolytic intermediate dihydroxyacetone phosphate (DHAP) to sn-glycerol 3-phosphate (G3P), the key precursor for phospholipid synthesis.</text>
</comment>
<comment type="catalytic activity">
    <reaction evidence="1">
        <text>sn-glycerol 3-phosphate + NAD(+) = dihydroxyacetone phosphate + NADH + H(+)</text>
        <dbReference type="Rhea" id="RHEA:11092"/>
        <dbReference type="ChEBI" id="CHEBI:15378"/>
        <dbReference type="ChEBI" id="CHEBI:57540"/>
        <dbReference type="ChEBI" id="CHEBI:57597"/>
        <dbReference type="ChEBI" id="CHEBI:57642"/>
        <dbReference type="ChEBI" id="CHEBI:57945"/>
        <dbReference type="EC" id="1.1.1.94"/>
    </reaction>
    <physiologicalReaction direction="right-to-left" evidence="1">
        <dbReference type="Rhea" id="RHEA:11094"/>
    </physiologicalReaction>
</comment>
<comment type="catalytic activity">
    <reaction evidence="1">
        <text>sn-glycerol 3-phosphate + NADP(+) = dihydroxyacetone phosphate + NADPH + H(+)</text>
        <dbReference type="Rhea" id="RHEA:11096"/>
        <dbReference type="ChEBI" id="CHEBI:15378"/>
        <dbReference type="ChEBI" id="CHEBI:57597"/>
        <dbReference type="ChEBI" id="CHEBI:57642"/>
        <dbReference type="ChEBI" id="CHEBI:57783"/>
        <dbReference type="ChEBI" id="CHEBI:58349"/>
        <dbReference type="EC" id="1.1.1.94"/>
    </reaction>
    <physiologicalReaction direction="right-to-left" evidence="1">
        <dbReference type="Rhea" id="RHEA:11098"/>
    </physiologicalReaction>
</comment>
<comment type="pathway">
    <text evidence="1">Membrane lipid metabolism; glycerophospholipid metabolism.</text>
</comment>
<comment type="subcellular location">
    <subcellularLocation>
        <location evidence="1">Cytoplasm</location>
    </subcellularLocation>
</comment>
<comment type="similarity">
    <text evidence="1">Belongs to the NAD-dependent glycerol-3-phosphate dehydrogenase family.</text>
</comment>
<keyword id="KW-0963">Cytoplasm</keyword>
<keyword id="KW-0444">Lipid biosynthesis</keyword>
<keyword id="KW-0443">Lipid metabolism</keyword>
<keyword id="KW-0520">NAD</keyword>
<keyword id="KW-0521">NADP</keyword>
<keyword id="KW-0547">Nucleotide-binding</keyword>
<keyword id="KW-0560">Oxidoreductase</keyword>
<keyword id="KW-0594">Phospholipid biosynthesis</keyword>
<keyword id="KW-1208">Phospholipid metabolism</keyword>
<keyword id="KW-1185">Reference proteome</keyword>
<reference key="1">
    <citation type="journal article" date="2005" name="Genome Res.">
        <title>Coping with cold: the genome of the versatile marine Antarctica bacterium Pseudoalteromonas haloplanktis TAC125.</title>
        <authorList>
            <person name="Medigue C."/>
            <person name="Krin E."/>
            <person name="Pascal G."/>
            <person name="Barbe V."/>
            <person name="Bernsel A."/>
            <person name="Bertin P.N."/>
            <person name="Cheung F."/>
            <person name="Cruveiller S."/>
            <person name="D'Amico S."/>
            <person name="Duilio A."/>
            <person name="Fang G."/>
            <person name="Feller G."/>
            <person name="Ho C."/>
            <person name="Mangenot S."/>
            <person name="Marino G."/>
            <person name="Nilsson J."/>
            <person name="Parrilli E."/>
            <person name="Rocha E.P.C."/>
            <person name="Rouy Z."/>
            <person name="Sekowska A."/>
            <person name="Tutino M.L."/>
            <person name="Vallenet D."/>
            <person name="von Heijne G."/>
            <person name="Danchin A."/>
        </authorList>
    </citation>
    <scope>NUCLEOTIDE SEQUENCE [LARGE SCALE GENOMIC DNA]</scope>
    <source>
        <strain>TAC 125</strain>
    </source>
</reference>
<feature type="chain" id="PRO_0000255343" description="Glycerol-3-phosphate dehydrogenase [NAD(P)+]">
    <location>
        <begin position="1"/>
        <end position="335"/>
    </location>
</feature>
<feature type="active site" description="Proton acceptor" evidence="1">
    <location>
        <position position="195"/>
    </location>
</feature>
<feature type="binding site" evidence="1">
    <location>
        <position position="15"/>
    </location>
    <ligand>
        <name>NADPH</name>
        <dbReference type="ChEBI" id="CHEBI:57783"/>
    </ligand>
</feature>
<feature type="binding site" evidence="1">
    <location>
        <position position="16"/>
    </location>
    <ligand>
        <name>NADPH</name>
        <dbReference type="ChEBI" id="CHEBI:57783"/>
    </ligand>
</feature>
<feature type="binding site" evidence="1">
    <location>
        <position position="36"/>
    </location>
    <ligand>
        <name>NADPH</name>
        <dbReference type="ChEBI" id="CHEBI:57783"/>
    </ligand>
</feature>
<feature type="binding site" evidence="1">
    <location>
        <position position="110"/>
    </location>
    <ligand>
        <name>NADPH</name>
        <dbReference type="ChEBI" id="CHEBI:57783"/>
    </ligand>
</feature>
<feature type="binding site" evidence="1">
    <location>
        <position position="110"/>
    </location>
    <ligand>
        <name>sn-glycerol 3-phosphate</name>
        <dbReference type="ChEBI" id="CHEBI:57597"/>
    </ligand>
</feature>
<feature type="binding site" evidence="1">
    <location>
        <position position="139"/>
    </location>
    <ligand>
        <name>sn-glycerol 3-phosphate</name>
        <dbReference type="ChEBI" id="CHEBI:57597"/>
    </ligand>
</feature>
<feature type="binding site" evidence="1">
    <location>
        <position position="141"/>
    </location>
    <ligand>
        <name>sn-glycerol 3-phosphate</name>
        <dbReference type="ChEBI" id="CHEBI:57597"/>
    </ligand>
</feature>
<feature type="binding site" evidence="1">
    <location>
        <position position="143"/>
    </location>
    <ligand>
        <name>NADPH</name>
        <dbReference type="ChEBI" id="CHEBI:57783"/>
    </ligand>
</feature>
<feature type="binding site" evidence="1">
    <location>
        <position position="195"/>
    </location>
    <ligand>
        <name>sn-glycerol 3-phosphate</name>
        <dbReference type="ChEBI" id="CHEBI:57597"/>
    </ligand>
</feature>
<feature type="binding site" evidence="1">
    <location>
        <position position="248"/>
    </location>
    <ligand>
        <name>sn-glycerol 3-phosphate</name>
        <dbReference type="ChEBI" id="CHEBI:57597"/>
    </ligand>
</feature>
<feature type="binding site" evidence="1">
    <location>
        <position position="258"/>
    </location>
    <ligand>
        <name>sn-glycerol 3-phosphate</name>
        <dbReference type="ChEBI" id="CHEBI:57597"/>
    </ligand>
</feature>
<feature type="binding site" evidence="1">
    <location>
        <position position="259"/>
    </location>
    <ligand>
        <name>NADPH</name>
        <dbReference type="ChEBI" id="CHEBI:57783"/>
    </ligand>
</feature>
<feature type="binding site" evidence="1">
    <location>
        <position position="259"/>
    </location>
    <ligand>
        <name>sn-glycerol 3-phosphate</name>
        <dbReference type="ChEBI" id="CHEBI:57597"/>
    </ligand>
</feature>
<feature type="binding site" evidence="1">
    <location>
        <position position="260"/>
    </location>
    <ligand>
        <name>sn-glycerol 3-phosphate</name>
        <dbReference type="ChEBI" id="CHEBI:57597"/>
    </ligand>
</feature>
<feature type="binding site" evidence="1">
    <location>
        <position position="283"/>
    </location>
    <ligand>
        <name>NADPH</name>
        <dbReference type="ChEBI" id="CHEBI:57783"/>
    </ligand>
</feature>
<feature type="binding site" evidence="1">
    <location>
        <position position="285"/>
    </location>
    <ligand>
        <name>NADPH</name>
        <dbReference type="ChEBI" id="CHEBI:57783"/>
    </ligand>
</feature>